<evidence type="ECO:0000256" key="1">
    <source>
        <dbReference type="SAM" id="MobiDB-lite"/>
    </source>
</evidence>
<evidence type="ECO:0007744" key="2">
    <source>
    </source>
</evidence>
<evidence type="ECO:0007744" key="3">
    <source>
    </source>
</evidence>
<organism>
    <name type="scientific">Saccharomyces cerevisiae (strain ATCC 204508 / S288c)</name>
    <name type="common">Baker's yeast</name>
    <dbReference type="NCBI Taxonomy" id="559292"/>
    <lineage>
        <taxon>Eukaryota</taxon>
        <taxon>Fungi</taxon>
        <taxon>Dikarya</taxon>
        <taxon>Ascomycota</taxon>
        <taxon>Saccharomycotina</taxon>
        <taxon>Saccharomycetes</taxon>
        <taxon>Saccharomycetales</taxon>
        <taxon>Saccharomycetaceae</taxon>
        <taxon>Saccharomyces</taxon>
    </lineage>
</organism>
<proteinExistence type="evidence at protein level"/>
<gene>
    <name type="ordered locus">YPL077C</name>
</gene>
<accession>Q02831</accession>
<accession>D6W3T9</accession>
<keyword id="KW-0597">Phosphoprotein</keyword>
<keyword id="KW-1185">Reference proteome</keyword>
<reference key="1">
    <citation type="journal article" date="1997" name="Nature">
        <title>The nucleotide sequence of Saccharomyces cerevisiae chromosome XVI.</title>
        <authorList>
            <person name="Bussey H."/>
            <person name="Storms R.K."/>
            <person name="Ahmed A."/>
            <person name="Albermann K."/>
            <person name="Allen E."/>
            <person name="Ansorge W."/>
            <person name="Araujo R."/>
            <person name="Aparicio A."/>
            <person name="Barrell B.G."/>
            <person name="Badcock K."/>
            <person name="Benes V."/>
            <person name="Botstein D."/>
            <person name="Bowman S."/>
            <person name="Brueckner M."/>
            <person name="Carpenter J."/>
            <person name="Cherry J.M."/>
            <person name="Chung E."/>
            <person name="Churcher C.M."/>
            <person name="Coster F."/>
            <person name="Davis K."/>
            <person name="Davis R.W."/>
            <person name="Dietrich F.S."/>
            <person name="Delius H."/>
            <person name="DiPaolo T."/>
            <person name="Dubois E."/>
            <person name="Duesterhoeft A."/>
            <person name="Duncan M."/>
            <person name="Floeth M."/>
            <person name="Fortin N."/>
            <person name="Friesen J.D."/>
            <person name="Fritz C."/>
            <person name="Goffeau A."/>
            <person name="Hall J."/>
            <person name="Hebling U."/>
            <person name="Heumann K."/>
            <person name="Hilbert H."/>
            <person name="Hillier L.W."/>
            <person name="Hunicke-Smith S."/>
            <person name="Hyman R.W."/>
            <person name="Johnston M."/>
            <person name="Kalman S."/>
            <person name="Kleine K."/>
            <person name="Komp C."/>
            <person name="Kurdi O."/>
            <person name="Lashkari D."/>
            <person name="Lew H."/>
            <person name="Lin A."/>
            <person name="Lin D."/>
            <person name="Louis E.J."/>
            <person name="Marathe R."/>
            <person name="Messenguy F."/>
            <person name="Mewes H.-W."/>
            <person name="Mirtipati S."/>
            <person name="Moestl D."/>
            <person name="Mueller-Auer S."/>
            <person name="Namath A."/>
            <person name="Nentwich U."/>
            <person name="Oefner P."/>
            <person name="Pearson D."/>
            <person name="Petel F.X."/>
            <person name="Pohl T.M."/>
            <person name="Purnelle B."/>
            <person name="Rajandream M.A."/>
            <person name="Rechmann S."/>
            <person name="Rieger M."/>
            <person name="Riles L."/>
            <person name="Roberts D."/>
            <person name="Schaefer M."/>
            <person name="Scharfe M."/>
            <person name="Scherens B."/>
            <person name="Schramm S."/>
            <person name="Schroeder M."/>
            <person name="Sdicu A.-M."/>
            <person name="Tettelin H."/>
            <person name="Urrestarazu L.A."/>
            <person name="Ushinsky S."/>
            <person name="Vierendeels F."/>
            <person name="Vissers S."/>
            <person name="Voss H."/>
            <person name="Walsh S.V."/>
            <person name="Wambutt R."/>
            <person name="Wang Y."/>
            <person name="Wedler E."/>
            <person name="Wedler H."/>
            <person name="Winnett E."/>
            <person name="Zhong W.-W."/>
            <person name="Zollner A."/>
            <person name="Vo D.H."/>
            <person name="Hani J."/>
        </authorList>
    </citation>
    <scope>NUCLEOTIDE SEQUENCE [LARGE SCALE GENOMIC DNA]</scope>
    <source>
        <strain>ATCC 204508 / S288c</strain>
    </source>
</reference>
<reference key="2">
    <citation type="journal article" date="2014" name="G3 (Bethesda)">
        <title>The reference genome sequence of Saccharomyces cerevisiae: Then and now.</title>
        <authorList>
            <person name="Engel S.R."/>
            <person name="Dietrich F.S."/>
            <person name="Fisk D.G."/>
            <person name="Binkley G."/>
            <person name="Balakrishnan R."/>
            <person name="Costanzo M.C."/>
            <person name="Dwight S.S."/>
            <person name="Hitz B.C."/>
            <person name="Karra K."/>
            <person name="Nash R.S."/>
            <person name="Weng S."/>
            <person name="Wong E.D."/>
            <person name="Lloyd P."/>
            <person name="Skrzypek M.S."/>
            <person name="Miyasato S.R."/>
            <person name="Simison M."/>
            <person name="Cherry J.M."/>
        </authorList>
    </citation>
    <scope>GENOME REANNOTATION</scope>
    <source>
        <strain>ATCC 204508 / S288c</strain>
    </source>
</reference>
<reference key="3">
    <citation type="journal article" date="2007" name="Genome Res.">
        <title>Approaching a complete repository of sequence-verified protein-encoding clones for Saccharomyces cerevisiae.</title>
        <authorList>
            <person name="Hu Y."/>
            <person name="Rolfs A."/>
            <person name="Bhullar B."/>
            <person name="Murthy T.V.S."/>
            <person name="Zhu C."/>
            <person name="Berger M.F."/>
            <person name="Camargo A.A."/>
            <person name="Kelley F."/>
            <person name="McCarron S."/>
            <person name="Jepson D."/>
            <person name="Richardson A."/>
            <person name="Raphael J."/>
            <person name="Moreira D."/>
            <person name="Taycher E."/>
            <person name="Zuo D."/>
            <person name="Mohr S."/>
            <person name="Kane M.F."/>
            <person name="Williamson J."/>
            <person name="Simpson A.J.G."/>
            <person name="Bulyk M.L."/>
            <person name="Harlow E."/>
            <person name="Marsischky G."/>
            <person name="Kolodner R.D."/>
            <person name="LaBaer J."/>
        </authorList>
    </citation>
    <scope>NUCLEOTIDE SEQUENCE [GENOMIC DNA]</scope>
    <source>
        <strain>ATCC 204508 / S288c</strain>
    </source>
</reference>
<reference key="4">
    <citation type="journal article" date="2007" name="J. Proteome Res.">
        <title>Large-scale phosphorylation analysis of alpha-factor-arrested Saccharomyces cerevisiae.</title>
        <authorList>
            <person name="Li X."/>
            <person name="Gerber S.A."/>
            <person name="Rudner A.D."/>
            <person name="Beausoleil S.A."/>
            <person name="Haas W."/>
            <person name="Villen J."/>
            <person name="Elias J.E."/>
            <person name="Gygi S.P."/>
        </authorList>
    </citation>
    <scope>PHOSPHORYLATION [LARGE SCALE ANALYSIS] AT SER-95</scope>
    <scope>IDENTIFICATION BY MASS SPECTROMETRY [LARGE SCALE ANALYSIS]</scope>
    <source>
        <strain>ADR376</strain>
    </source>
</reference>
<reference key="5">
    <citation type="journal article" date="2009" name="Science">
        <title>Global analysis of Cdk1 substrate phosphorylation sites provides insights into evolution.</title>
        <authorList>
            <person name="Holt L.J."/>
            <person name="Tuch B.B."/>
            <person name="Villen J."/>
            <person name="Johnson A.D."/>
            <person name="Gygi S.P."/>
            <person name="Morgan D.O."/>
        </authorList>
    </citation>
    <scope>PHOSPHORYLATION [LARGE SCALE ANALYSIS] AT SER-59 AND SER-95</scope>
    <scope>IDENTIFICATION BY MASS SPECTROMETRY [LARGE SCALE ANALYSIS]</scope>
</reference>
<reference key="6">
    <citation type="journal article" date="2012" name="Proc. Natl. Acad. Sci. U.S.A.">
        <title>N-terminal acetylome analyses and functional insights of the N-terminal acetyltransferase NatB.</title>
        <authorList>
            <person name="Van Damme P."/>
            <person name="Lasa M."/>
            <person name="Polevoda B."/>
            <person name="Gazquez C."/>
            <person name="Elosegui-Artola A."/>
            <person name="Kim D.S."/>
            <person name="De Juan-Pardo E."/>
            <person name="Demeyer K."/>
            <person name="Hole K."/>
            <person name="Larrea E."/>
            <person name="Timmerman E."/>
            <person name="Prieto J."/>
            <person name="Arnesen T."/>
            <person name="Sherman F."/>
            <person name="Gevaert K."/>
            <person name="Aldabe R."/>
        </authorList>
    </citation>
    <scope>IDENTIFICATION BY MASS SPECTROMETRY [LARGE SCALE ANALYSIS]</scope>
</reference>
<protein>
    <recommendedName>
        <fullName>Uncharacterized protein YPL077C</fullName>
    </recommendedName>
</protein>
<sequence length="240" mass="27469">MKDLQKKSSVRRQITNEDDERYGEDSIHDLPRTIPNVNPYIRNSGFRPSYSSQIPSTRSLFNNYYNRSSANTVGNDTIDTDSVSYNGVAKFRRNSVDIPLQTHNRLEVRPIIDRQDYLWREIDALDDVKRQAQATELYDQFPPGFENKLMQLRQAHSKLLQVLRDRNAKIEEEQRREVAVATAAAMMTRTPSPTGKSVGDEATSNNMHSSSAIRNPNGPTVDPEEGKYIQELVNTIRELQ</sequence>
<feature type="chain" id="PRO_0000238644" description="Uncharacterized protein YPL077C">
    <location>
        <begin position="1"/>
        <end position="240"/>
    </location>
</feature>
<feature type="region of interest" description="Disordered" evidence="1">
    <location>
        <begin position="1"/>
        <end position="27"/>
    </location>
</feature>
<feature type="region of interest" description="Disordered" evidence="1">
    <location>
        <begin position="189"/>
        <end position="227"/>
    </location>
</feature>
<feature type="compositionally biased region" description="Polar residues" evidence="1">
    <location>
        <begin position="202"/>
        <end position="218"/>
    </location>
</feature>
<feature type="modified residue" description="Phosphoserine" evidence="3">
    <location>
        <position position="59"/>
    </location>
</feature>
<feature type="modified residue" description="Phosphoserine" evidence="2 3">
    <location>
        <position position="95"/>
    </location>
</feature>
<dbReference type="EMBL" id="U41849">
    <property type="protein sequence ID" value="AAB68261.1"/>
    <property type="molecule type" value="Genomic_DNA"/>
</dbReference>
<dbReference type="EMBL" id="AY558334">
    <property type="protein sequence ID" value="AAS56660.1"/>
    <property type="molecule type" value="Genomic_DNA"/>
</dbReference>
<dbReference type="EMBL" id="BK006949">
    <property type="protein sequence ID" value="DAA11355.1"/>
    <property type="molecule type" value="Genomic_DNA"/>
</dbReference>
<dbReference type="PIR" id="S61110">
    <property type="entry name" value="S61110"/>
</dbReference>
<dbReference type="RefSeq" id="NP_015248.1">
    <property type="nucleotide sequence ID" value="NM_001183891.1"/>
</dbReference>
<dbReference type="BioGRID" id="36103">
    <property type="interactions" value="105"/>
</dbReference>
<dbReference type="DIP" id="DIP-4022N"/>
<dbReference type="FunCoup" id="Q02831">
    <property type="interactions" value="44"/>
</dbReference>
<dbReference type="IntAct" id="Q02831">
    <property type="interactions" value="8"/>
</dbReference>
<dbReference type="STRING" id="4932.YPL077C"/>
<dbReference type="iPTMnet" id="Q02831"/>
<dbReference type="PaxDb" id="4932-YPL077C"/>
<dbReference type="PeptideAtlas" id="Q02831"/>
<dbReference type="EnsemblFungi" id="YPL077C_mRNA">
    <property type="protein sequence ID" value="YPL077C"/>
    <property type="gene ID" value="YPL077C"/>
</dbReference>
<dbReference type="GeneID" id="856028"/>
<dbReference type="KEGG" id="sce:YPL077C"/>
<dbReference type="AGR" id="SGD:S000005998"/>
<dbReference type="SGD" id="S000005998">
    <property type="gene designation" value="YPL077C"/>
</dbReference>
<dbReference type="VEuPathDB" id="FungiDB:YPL077C"/>
<dbReference type="eggNOG" id="ENOG502S5CE">
    <property type="taxonomic scope" value="Eukaryota"/>
</dbReference>
<dbReference type="HOGENOM" id="CLU_1078031_0_0_1"/>
<dbReference type="InParanoid" id="Q02831"/>
<dbReference type="OMA" id="ANTVGND"/>
<dbReference type="OrthoDB" id="4065597at2759"/>
<dbReference type="BioCyc" id="YEAST:G3O-33984-MONOMER"/>
<dbReference type="BioGRID-ORCS" id="856028">
    <property type="hits" value="1 hit in 10 CRISPR screens"/>
</dbReference>
<dbReference type="PRO" id="PR:Q02831"/>
<dbReference type="Proteomes" id="UP000002311">
    <property type="component" value="Chromosome XVI"/>
</dbReference>
<dbReference type="RNAct" id="Q02831">
    <property type="molecule type" value="protein"/>
</dbReference>
<dbReference type="Pfam" id="PF17242">
    <property type="entry name" value="DUF5315"/>
    <property type="match status" value="1"/>
</dbReference>
<name>YP077_YEAST</name>